<sequence>MIKRPRRLRTNEVLRKAVRETRLSTDSLIWPLFIVEGKNIKKEISSLPGQYHFSPDMVGKAIEAALKADVKSVLLFGLPKHKDEKGSEAYNENGVLQQGIREIKQRYPQMQVITDICMCEYTSHGHCGILEGERVDNDRTLPYLEKIALSHVMAGADMIAPSDMMDGRIYALRSTLDKNGFTDIPIMSYAVKYASSFYGPFREAA</sequence>
<keyword id="KW-0350">Heme biosynthesis</keyword>
<keyword id="KW-0456">Lyase</keyword>
<keyword id="KW-0479">Metal-binding</keyword>
<keyword id="KW-0627">Porphyrin biosynthesis</keyword>
<keyword id="KW-0862">Zinc</keyword>
<gene>
    <name type="primary">hemB</name>
</gene>
<organism>
    <name type="scientific">Ruminiclostridium josui</name>
    <name type="common">Clostridium josui</name>
    <dbReference type="NCBI Taxonomy" id="1499"/>
    <lineage>
        <taxon>Bacteria</taxon>
        <taxon>Bacillati</taxon>
        <taxon>Bacillota</taxon>
        <taxon>Clostridia</taxon>
        <taxon>Eubacteriales</taxon>
        <taxon>Oscillospiraceae</taxon>
        <taxon>Ruminiclostridium</taxon>
    </lineage>
</organism>
<protein>
    <recommendedName>
        <fullName>Delta-aminolevulinic acid dehydratase</fullName>
        <shortName>ALAD</shortName>
        <shortName>ALADH</shortName>
        <ecNumber>4.2.1.24</ecNumber>
    </recommendedName>
    <alternativeName>
        <fullName>Porphobilinogen synthase</fullName>
    </alternativeName>
</protein>
<accession>Q59295</accession>
<reference key="1">
    <citation type="journal article" date="1995" name="J. Bacteriol.">
        <title>Cloning and sequencing of some genes responsible for porphyrin biosynthesis from the anaerobic bacterium Clostridium josui.</title>
        <authorList>
            <person name="Fujino E."/>
            <person name="Fujino T."/>
            <person name="Karita S."/>
            <person name="Sakka K."/>
            <person name="Ohmiya K."/>
        </authorList>
    </citation>
    <scope>NUCLEOTIDE SEQUENCE [GENOMIC DNA]</scope>
    <source>
        <strain>DSM 25723 / FERM P-9684 / JCM 17888 / KCTC 15379 / III</strain>
    </source>
</reference>
<comment type="function">
    <text evidence="1">Catalyzes an early step in the biosynthesis of tetrapyrroles. Binds two molecules of 5-aminolevulinate per subunit, each at a distinct site, and catalyzes their condensation to form porphobilinogen (By similarity).</text>
</comment>
<comment type="catalytic activity">
    <reaction>
        <text>2 5-aminolevulinate = porphobilinogen + 2 H2O + H(+)</text>
        <dbReference type="Rhea" id="RHEA:24064"/>
        <dbReference type="ChEBI" id="CHEBI:15377"/>
        <dbReference type="ChEBI" id="CHEBI:15378"/>
        <dbReference type="ChEBI" id="CHEBI:58126"/>
        <dbReference type="ChEBI" id="CHEBI:356416"/>
        <dbReference type="EC" id="4.2.1.24"/>
    </reaction>
</comment>
<comment type="cofactor">
    <cofactor evidence="1">
        <name>Zn(2+)</name>
        <dbReference type="ChEBI" id="CHEBI:29105"/>
    </cofactor>
    <text evidence="1">Binds 1 zinc ion per monomer.</text>
</comment>
<comment type="pathway">
    <text>Porphyrin-containing compound metabolism; protoporphyrin-IX biosynthesis; coproporphyrinogen-III from 5-aminolevulinate: step 1/4.</text>
</comment>
<comment type="subunit">
    <text evidence="1">Homooctamer.</text>
</comment>
<comment type="similarity">
    <text evidence="2">Belongs to the ALAD family.</text>
</comment>
<proteinExistence type="inferred from homology"/>
<evidence type="ECO:0000250" key="1"/>
<evidence type="ECO:0000305" key="2"/>
<dbReference type="EC" id="4.2.1.24"/>
<dbReference type="EMBL" id="D28503">
    <property type="protein sequence ID" value="BAA05863.1"/>
    <property type="molecule type" value="Genomic_DNA"/>
</dbReference>
<dbReference type="PIR" id="I40812">
    <property type="entry name" value="I40812"/>
</dbReference>
<dbReference type="SMR" id="Q59295"/>
<dbReference type="UniPathway" id="UPA00251">
    <property type="reaction ID" value="UER00318"/>
</dbReference>
<dbReference type="GO" id="GO:0005829">
    <property type="term" value="C:cytosol"/>
    <property type="evidence" value="ECO:0007669"/>
    <property type="project" value="TreeGrafter"/>
</dbReference>
<dbReference type="GO" id="GO:0004655">
    <property type="term" value="F:porphobilinogen synthase activity"/>
    <property type="evidence" value="ECO:0007669"/>
    <property type="project" value="UniProtKB-EC"/>
</dbReference>
<dbReference type="GO" id="GO:0008270">
    <property type="term" value="F:zinc ion binding"/>
    <property type="evidence" value="ECO:0007669"/>
    <property type="project" value="TreeGrafter"/>
</dbReference>
<dbReference type="GO" id="GO:0006782">
    <property type="term" value="P:protoporphyrinogen IX biosynthetic process"/>
    <property type="evidence" value="ECO:0007669"/>
    <property type="project" value="UniProtKB-UniPathway"/>
</dbReference>
<dbReference type="Gene3D" id="3.20.20.70">
    <property type="entry name" value="Aldolase class I"/>
    <property type="match status" value="1"/>
</dbReference>
<dbReference type="InterPro" id="IPR001731">
    <property type="entry name" value="ALAD"/>
</dbReference>
<dbReference type="InterPro" id="IPR013785">
    <property type="entry name" value="Aldolase_TIM"/>
</dbReference>
<dbReference type="PANTHER" id="PTHR11458">
    <property type="entry name" value="DELTA-AMINOLEVULINIC ACID DEHYDRATASE"/>
    <property type="match status" value="1"/>
</dbReference>
<dbReference type="PANTHER" id="PTHR11458:SF0">
    <property type="entry name" value="DELTA-AMINOLEVULINIC ACID DEHYDRATASE"/>
    <property type="match status" value="1"/>
</dbReference>
<dbReference type="Pfam" id="PF00490">
    <property type="entry name" value="ALAD"/>
    <property type="match status" value="1"/>
</dbReference>
<dbReference type="PRINTS" id="PR00144">
    <property type="entry name" value="DALDHYDRTASE"/>
</dbReference>
<dbReference type="SMART" id="SM01004">
    <property type="entry name" value="ALAD"/>
    <property type="match status" value="1"/>
</dbReference>
<dbReference type="SUPFAM" id="SSF51569">
    <property type="entry name" value="Aldolase"/>
    <property type="match status" value="1"/>
</dbReference>
<name>HEM2_RUMJO</name>
<feature type="chain" id="PRO_0000140500" description="Delta-aminolevulinic acid dehydratase">
    <location>
        <begin position="1"/>
        <end position="205" status="greater than"/>
    </location>
</feature>
<feature type="active site" description="Schiff-base intermediate with substrate" evidence="1">
    <location>
        <position position="192"/>
    </location>
</feature>
<feature type="binding site" evidence="1">
    <location>
        <position position="117"/>
    </location>
    <ligand>
        <name>Zn(2+)</name>
        <dbReference type="ChEBI" id="CHEBI:29105"/>
        <note>catalytic</note>
    </ligand>
</feature>
<feature type="binding site" evidence="1">
    <location>
        <position position="119"/>
    </location>
    <ligand>
        <name>Zn(2+)</name>
        <dbReference type="ChEBI" id="CHEBI:29105"/>
        <note>catalytic</note>
    </ligand>
</feature>
<feature type="binding site" evidence="1">
    <location>
        <position position="127"/>
    </location>
    <ligand>
        <name>Zn(2+)</name>
        <dbReference type="ChEBI" id="CHEBI:29105"/>
        <note>catalytic</note>
    </ligand>
</feature>
<feature type="binding site" evidence="1">
    <location>
        <position position="202"/>
    </location>
    <ligand>
        <name>substrate</name>
    </ligand>
</feature>
<feature type="non-terminal residue">
    <location>
        <position position="205"/>
    </location>
</feature>